<evidence type="ECO:0000255" key="1">
    <source>
        <dbReference type="PROSITE-ProRule" id="PRU00336"/>
    </source>
</evidence>
<evidence type="ECO:0000256" key="2">
    <source>
        <dbReference type="SAM" id="MobiDB-lite"/>
    </source>
</evidence>
<evidence type="ECO:0000269" key="3">
    <source>
    </source>
</evidence>
<evidence type="ECO:0000303" key="4">
    <source>
    </source>
</evidence>
<evidence type="ECO:0000305" key="5"/>
<evidence type="ECO:0000312" key="6">
    <source>
        <dbReference type="EMBL" id="AAQ22453.1"/>
    </source>
</evidence>
<evidence type="ECO:0000312" key="7">
    <source>
        <dbReference type="EMBL" id="ACJ13154.1"/>
    </source>
</evidence>
<evidence type="ECO:0000312" key="8">
    <source>
        <dbReference type="FlyBase" id="FBgn0036556"/>
    </source>
</evidence>
<evidence type="ECO:0000312" key="9">
    <source>
        <dbReference type="Proteomes" id="UP000000803"/>
    </source>
</evidence>
<reference evidence="9" key="1">
    <citation type="journal article" date="2000" name="Science">
        <title>The genome sequence of Drosophila melanogaster.</title>
        <authorList>
            <person name="Adams M.D."/>
            <person name="Celniker S.E."/>
            <person name="Holt R.A."/>
            <person name="Evans C.A."/>
            <person name="Gocayne J.D."/>
            <person name="Amanatides P.G."/>
            <person name="Scherer S.E."/>
            <person name="Li P.W."/>
            <person name="Hoskins R.A."/>
            <person name="Galle R.F."/>
            <person name="George R.A."/>
            <person name="Lewis S.E."/>
            <person name="Richards S."/>
            <person name="Ashburner M."/>
            <person name="Henderson S.N."/>
            <person name="Sutton G.G."/>
            <person name="Wortman J.R."/>
            <person name="Yandell M.D."/>
            <person name="Zhang Q."/>
            <person name="Chen L.X."/>
            <person name="Brandon R.C."/>
            <person name="Rogers Y.-H.C."/>
            <person name="Blazej R.G."/>
            <person name="Champe M."/>
            <person name="Pfeiffer B.D."/>
            <person name="Wan K.H."/>
            <person name="Doyle C."/>
            <person name="Baxter E.G."/>
            <person name="Helt G."/>
            <person name="Nelson C.R."/>
            <person name="Miklos G.L.G."/>
            <person name="Abril J.F."/>
            <person name="Agbayani A."/>
            <person name="An H.-J."/>
            <person name="Andrews-Pfannkoch C."/>
            <person name="Baldwin D."/>
            <person name="Ballew R.M."/>
            <person name="Basu A."/>
            <person name="Baxendale J."/>
            <person name="Bayraktaroglu L."/>
            <person name="Beasley E.M."/>
            <person name="Beeson K.Y."/>
            <person name="Benos P.V."/>
            <person name="Berman B.P."/>
            <person name="Bhandari D."/>
            <person name="Bolshakov S."/>
            <person name="Borkova D."/>
            <person name="Botchan M.R."/>
            <person name="Bouck J."/>
            <person name="Brokstein P."/>
            <person name="Brottier P."/>
            <person name="Burtis K.C."/>
            <person name="Busam D.A."/>
            <person name="Butler H."/>
            <person name="Cadieu E."/>
            <person name="Center A."/>
            <person name="Chandra I."/>
            <person name="Cherry J.M."/>
            <person name="Cawley S."/>
            <person name="Dahlke C."/>
            <person name="Davenport L.B."/>
            <person name="Davies P."/>
            <person name="de Pablos B."/>
            <person name="Delcher A."/>
            <person name="Deng Z."/>
            <person name="Mays A.D."/>
            <person name="Dew I."/>
            <person name="Dietz S.M."/>
            <person name="Dodson K."/>
            <person name="Doup L.E."/>
            <person name="Downes M."/>
            <person name="Dugan-Rocha S."/>
            <person name="Dunkov B.C."/>
            <person name="Dunn P."/>
            <person name="Durbin K.J."/>
            <person name="Evangelista C.C."/>
            <person name="Ferraz C."/>
            <person name="Ferriera S."/>
            <person name="Fleischmann W."/>
            <person name="Fosler C."/>
            <person name="Gabrielian A.E."/>
            <person name="Garg N.S."/>
            <person name="Gelbart W.M."/>
            <person name="Glasser K."/>
            <person name="Glodek A."/>
            <person name="Gong F."/>
            <person name="Gorrell J.H."/>
            <person name="Gu Z."/>
            <person name="Guan P."/>
            <person name="Harris M."/>
            <person name="Harris N.L."/>
            <person name="Harvey D.A."/>
            <person name="Heiman T.J."/>
            <person name="Hernandez J.R."/>
            <person name="Houck J."/>
            <person name="Hostin D."/>
            <person name="Houston K.A."/>
            <person name="Howland T.J."/>
            <person name="Wei M.-H."/>
            <person name="Ibegwam C."/>
            <person name="Jalali M."/>
            <person name="Kalush F."/>
            <person name="Karpen G.H."/>
            <person name="Ke Z."/>
            <person name="Kennison J.A."/>
            <person name="Ketchum K.A."/>
            <person name="Kimmel B.E."/>
            <person name="Kodira C.D."/>
            <person name="Kraft C.L."/>
            <person name="Kravitz S."/>
            <person name="Kulp D."/>
            <person name="Lai Z."/>
            <person name="Lasko P."/>
            <person name="Lei Y."/>
            <person name="Levitsky A.A."/>
            <person name="Li J.H."/>
            <person name="Li Z."/>
            <person name="Liang Y."/>
            <person name="Lin X."/>
            <person name="Liu X."/>
            <person name="Mattei B."/>
            <person name="McIntosh T.C."/>
            <person name="McLeod M.P."/>
            <person name="McPherson D."/>
            <person name="Merkulov G."/>
            <person name="Milshina N.V."/>
            <person name="Mobarry C."/>
            <person name="Morris J."/>
            <person name="Moshrefi A."/>
            <person name="Mount S.M."/>
            <person name="Moy M."/>
            <person name="Murphy B."/>
            <person name="Murphy L."/>
            <person name="Muzny D.M."/>
            <person name="Nelson D.L."/>
            <person name="Nelson D.R."/>
            <person name="Nelson K.A."/>
            <person name="Nixon K."/>
            <person name="Nusskern D.R."/>
            <person name="Pacleb J.M."/>
            <person name="Palazzolo M."/>
            <person name="Pittman G.S."/>
            <person name="Pan S."/>
            <person name="Pollard J."/>
            <person name="Puri V."/>
            <person name="Reese M.G."/>
            <person name="Reinert K."/>
            <person name="Remington K."/>
            <person name="Saunders R.D.C."/>
            <person name="Scheeler F."/>
            <person name="Shen H."/>
            <person name="Shue B.C."/>
            <person name="Siden-Kiamos I."/>
            <person name="Simpson M."/>
            <person name="Skupski M.P."/>
            <person name="Smith T.J."/>
            <person name="Spier E."/>
            <person name="Spradling A.C."/>
            <person name="Stapleton M."/>
            <person name="Strong R."/>
            <person name="Sun E."/>
            <person name="Svirskas R."/>
            <person name="Tector C."/>
            <person name="Turner R."/>
            <person name="Venter E."/>
            <person name="Wang A.H."/>
            <person name="Wang X."/>
            <person name="Wang Z.-Y."/>
            <person name="Wassarman D.A."/>
            <person name="Weinstock G.M."/>
            <person name="Weissenbach J."/>
            <person name="Williams S.M."/>
            <person name="Woodage T."/>
            <person name="Worley K.C."/>
            <person name="Wu D."/>
            <person name="Yang S."/>
            <person name="Yao Q.A."/>
            <person name="Ye J."/>
            <person name="Yeh R.-F."/>
            <person name="Zaveri J.S."/>
            <person name="Zhan M."/>
            <person name="Zhang G."/>
            <person name="Zhao Q."/>
            <person name="Zheng L."/>
            <person name="Zheng X.H."/>
            <person name="Zhong F.N."/>
            <person name="Zhong W."/>
            <person name="Zhou X."/>
            <person name="Zhu S.C."/>
            <person name="Zhu X."/>
            <person name="Smith H.O."/>
            <person name="Gibbs R.A."/>
            <person name="Myers E.W."/>
            <person name="Rubin G.M."/>
            <person name="Venter J.C."/>
        </authorList>
    </citation>
    <scope>NUCLEOTIDE SEQUENCE [LARGE SCALE GENOMIC DNA]</scope>
    <source>
        <strain evidence="9">Berkeley</strain>
    </source>
</reference>
<reference evidence="9" key="2">
    <citation type="journal article" date="2002" name="Genome Biol.">
        <title>Annotation of the Drosophila melanogaster euchromatic genome: a systematic review.</title>
        <authorList>
            <person name="Misra S."/>
            <person name="Crosby M.A."/>
            <person name="Mungall C.J."/>
            <person name="Matthews B.B."/>
            <person name="Campbell K.S."/>
            <person name="Hradecky P."/>
            <person name="Huang Y."/>
            <person name="Kaminker J.S."/>
            <person name="Millburn G.H."/>
            <person name="Prochnik S.E."/>
            <person name="Smith C.D."/>
            <person name="Tupy J.L."/>
            <person name="Whitfield E.J."/>
            <person name="Bayraktaroglu L."/>
            <person name="Berman B.P."/>
            <person name="Bettencourt B.R."/>
            <person name="Celniker S.E."/>
            <person name="de Grey A.D.N.J."/>
            <person name="Drysdale R.A."/>
            <person name="Harris N.L."/>
            <person name="Richter J."/>
            <person name="Russo S."/>
            <person name="Schroeder A.J."/>
            <person name="Shu S.Q."/>
            <person name="Stapleton M."/>
            <person name="Yamada C."/>
            <person name="Ashburner M."/>
            <person name="Gelbart W.M."/>
            <person name="Rubin G.M."/>
            <person name="Lewis S.E."/>
        </authorList>
    </citation>
    <scope>GENOME REANNOTATION</scope>
    <source>
        <strain evidence="9">Berkeley</strain>
    </source>
</reference>
<reference evidence="6" key="3">
    <citation type="submission" date="2003-08" db="EMBL/GenBank/DDBJ databases">
        <authorList>
            <person name="Stapleton M."/>
            <person name="Brokstein P."/>
            <person name="Hong L."/>
            <person name="Agbayani A."/>
            <person name="Carlson J."/>
            <person name="Champe M."/>
            <person name="Chavez C."/>
            <person name="Dorsett V."/>
            <person name="Dresnek D."/>
            <person name="Farfan D."/>
            <person name="Frise E."/>
            <person name="George R."/>
            <person name="Gonzalez M."/>
            <person name="Guarin H."/>
            <person name="Kronmiller B."/>
            <person name="Li P."/>
            <person name="Liao G."/>
            <person name="Miranda A."/>
            <person name="Mungall C.J."/>
            <person name="Nunoo J."/>
            <person name="Pacleb J."/>
            <person name="Paragas V."/>
            <person name="Park S."/>
            <person name="Patel S."/>
            <person name="Phouanenavong S."/>
            <person name="Wan K."/>
            <person name="Yu C."/>
            <person name="Lewis S.E."/>
            <person name="Rubin G.M."/>
            <person name="Celniker S."/>
        </authorList>
    </citation>
    <scope>NUCLEOTIDE SEQUENCE [LARGE SCALE MRNA] (ISOFORM A)</scope>
    <source>
        <strain evidence="6">Berkeley</strain>
    </source>
</reference>
<reference evidence="7" key="4">
    <citation type="submission" date="2008-11" db="EMBL/GenBank/DDBJ databases">
        <authorList>
            <person name="Carlson J."/>
            <person name="Booth B."/>
            <person name="Frise E."/>
            <person name="Park S."/>
            <person name="Wan K."/>
            <person name="Yu C."/>
            <person name="Celniker S."/>
        </authorList>
    </citation>
    <scope>NUCLEOTIDE SEQUENCE [LARGE SCALE MRNA]</scope>
</reference>
<reference evidence="5" key="5">
    <citation type="journal article" date="2019" name="Cell">
        <title>Amyloid-like Assembly Activates a Phosphatase in the Developing Drosophila Embryo.</title>
        <authorList>
            <person name="Nil Z."/>
            <person name="Hervas R."/>
            <person name="Gerbich T."/>
            <person name="Leal P."/>
            <person name="Yu Z."/>
            <person name="Saraf A."/>
            <person name="Sardiu M."/>
            <person name="Lange J.J."/>
            <person name="Yi K."/>
            <person name="Unruh J."/>
            <person name="Slaughter B."/>
            <person name="Si K."/>
        </authorList>
    </citation>
    <scope>IDENTIFICATION BY MASS SPECTROMETRY</scope>
    <scope>FUNCTION</scope>
    <scope>CATALYTIC ACTIVITY</scope>
    <scope>ACTIVITY REGULATION</scope>
    <scope>SUBUNIT</scope>
    <scope>INTERACTION WITH BABO; DAH; IRK1; PCH2; RAS64B; SAX AND SRC64B</scope>
    <scope>SUBCELLULAR LOCATION</scope>
    <scope>DEVELOPMENTAL STAGE</scope>
    <scope>MUTAGENESIS OF 118-ASP--ASP-120</scope>
</reference>
<sequence length="352" mass="40326">MDATSIITQVSRDDEQLNVYPSYPNDKDAWLGFSGSVWLPDCPADHAQLTHDVDRLKPQKRGLFHSLLCCWRRNRTKTNQNGTQIDGSTTPPPLPDQQRYLLPQVRLTDMHRKCMVIDLDETLVHSSFKPIPNADFIVPVEIDGTVHQVYVLKRPHVDEFLQKMGELYECVLFTASLAKYADPVADLLDKWNVFRARLFRESCVYYRGNYIKDLNRLGRDLQKIVIVDNSPASYIFHPDNAVPVKSWFDDVTDCELRELIPLFEKLSKVDSVYSVLCNSNQPLNNQTNQQQHPQELQQAPNQLHQQLQQQQQQQTISATTVITQATTLSAPTMLNQQQTSPPSPQSELLQKT</sequence>
<protein>
    <recommendedName>
        <fullName evidence="4 8">Phosphatase Herzog</fullName>
        <ecNumber evidence="3">3.1.3.16</ecNumber>
    </recommendedName>
</protein>
<keyword id="KW-0025">Alternative splicing</keyword>
<keyword id="KW-1003">Cell membrane</keyword>
<keyword id="KW-0378">Hydrolase</keyword>
<keyword id="KW-0472">Membrane</keyword>
<keyword id="KW-1185">Reference proteome</keyword>
<gene>
    <name evidence="4 8" type="primary">hzg</name>
    <name evidence="8" type="synonym">24664944</name>
    <name evidence="8" type="ORF">CG5830</name>
</gene>
<dbReference type="EC" id="3.1.3.16" evidence="3"/>
<dbReference type="EMBL" id="AE014296">
    <property type="protein sequence ID" value="AGB94605.1"/>
    <property type="molecule type" value="Genomic_DNA"/>
</dbReference>
<dbReference type="EMBL" id="AE014296">
    <property type="protein sequence ID" value="AAF49553.2"/>
    <property type="molecule type" value="Genomic_DNA"/>
</dbReference>
<dbReference type="EMBL" id="BT009984">
    <property type="protein sequence ID" value="AAQ22453.1"/>
    <property type="molecule type" value="mRNA"/>
</dbReference>
<dbReference type="EMBL" id="BT050447">
    <property type="protein sequence ID" value="ACJ13154.1"/>
    <property type="molecule type" value="mRNA"/>
</dbReference>
<dbReference type="RefSeq" id="NP_001261912.1">
    <molecule id="M9PFN0-1"/>
    <property type="nucleotide sequence ID" value="NM_001274983.2"/>
</dbReference>
<dbReference type="RefSeq" id="NP_648825.1">
    <molecule id="M9PFN0-2"/>
    <property type="nucleotide sequence ID" value="NM_140568.3"/>
</dbReference>
<dbReference type="SMR" id="M9PFN0"/>
<dbReference type="FunCoup" id="M9PFN0">
    <property type="interactions" value="358"/>
</dbReference>
<dbReference type="IntAct" id="M9PFN0">
    <property type="interactions" value="14"/>
</dbReference>
<dbReference type="STRING" id="7227.FBpp0305756"/>
<dbReference type="PaxDb" id="7227-FBpp0305756"/>
<dbReference type="DNASU" id="39748"/>
<dbReference type="EnsemblMetazoa" id="FBtr0075521">
    <molecule id="M9PFN0-2"/>
    <property type="protein sequence ID" value="FBpp0075276"/>
    <property type="gene ID" value="FBgn0036556"/>
</dbReference>
<dbReference type="EnsemblMetazoa" id="FBtr0333579">
    <molecule id="M9PFN0-1"/>
    <property type="protein sequence ID" value="FBpp0305756"/>
    <property type="gene ID" value="FBgn0036556"/>
</dbReference>
<dbReference type="GeneID" id="39748"/>
<dbReference type="KEGG" id="dme:Dmel_CG5830"/>
<dbReference type="UCSC" id="CG5830-RA">
    <property type="organism name" value="d. melanogaster"/>
</dbReference>
<dbReference type="AGR" id="FB:FBgn0036556"/>
<dbReference type="CTD" id="39748"/>
<dbReference type="FlyBase" id="FBgn0036556">
    <property type="gene designation" value="hzg"/>
</dbReference>
<dbReference type="VEuPathDB" id="VectorBase:FBgn0036556"/>
<dbReference type="eggNOG" id="KOG1605">
    <property type="taxonomic scope" value="Eukaryota"/>
</dbReference>
<dbReference type="GeneTree" id="ENSGT01040000240451"/>
<dbReference type="HOGENOM" id="CLU_020262_4_0_1"/>
<dbReference type="InParanoid" id="M9PFN0"/>
<dbReference type="OMA" id="MDLIPFF"/>
<dbReference type="OrthoDB" id="277011at2759"/>
<dbReference type="BioGRID-ORCS" id="39748">
    <property type="hits" value="0 hits in 3 CRISPR screens"/>
</dbReference>
<dbReference type="GenomeRNAi" id="39748"/>
<dbReference type="PRO" id="PR:M9PFN0"/>
<dbReference type="Proteomes" id="UP000000803">
    <property type="component" value="Chromosome 3L"/>
</dbReference>
<dbReference type="Bgee" id="FBgn0036556">
    <property type="expression patterns" value="Expressed in adult tracheocyte (Drosophila) in adult thorax and 274 other cell types or tissues"/>
</dbReference>
<dbReference type="ExpressionAtlas" id="M9PFN0">
    <property type="expression patterns" value="baseline and differential"/>
</dbReference>
<dbReference type="GO" id="GO:0005886">
    <property type="term" value="C:plasma membrane"/>
    <property type="evidence" value="ECO:0000315"/>
    <property type="project" value="FlyBase"/>
</dbReference>
<dbReference type="GO" id="GO:0004721">
    <property type="term" value="F:phosphoprotein phosphatase activity"/>
    <property type="evidence" value="ECO:0000315"/>
    <property type="project" value="FlyBase"/>
</dbReference>
<dbReference type="GO" id="GO:0008420">
    <property type="term" value="F:RNA polymerase II CTD heptapeptide repeat phosphatase activity"/>
    <property type="evidence" value="ECO:0000250"/>
    <property type="project" value="FlyBase"/>
</dbReference>
<dbReference type="GO" id="GO:0040019">
    <property type="term" value="P:positive regulation of embryonic development"/>
    <property type="evidence" value="ECO:0000315"/>
    <property type="project" value="FlyBase"/>
</dbReference>
<dbReference type="CDD" id="cd07521">
    <property type="entry name" value="HAD_FCP1-like"/>
    <property type="match status" value="1"/>
</dbReference>
<dbReference type="FunFam" id="3.40.50.1000:FF:000013">
    <property type="entry name" value="Carboxy-terminal domain RNA polymerase II polypeptide A small"/>
    <property type="match status" value="1"/>
</dbReference>
<dbReference type="Gene3D" id="3.40.50.1000">
    <property type="entry name" value="HAD superfamily/HAD-like"/>
    <property type="match status" value="1"/>
</dbReference>
<dbReference type="InterPro" id="IPR011948">
    <property type="entry name" value="Dullard_phosphatase"/>
</dbReference>
<dbReference type="InterPro" id="IPR004274">
    <property type="entry name" value="FCP1_dom"/>
</dbReference>
<dbReference type="InterPro" id="IPR036412">
    <property type="entry name" value="HAD-like_sf"/>
</dbReference>
<dbReference type="InterPro" id="IPR023214">
    <property type="entry name" value="HAD_sf"/>
</dbReference>
<dbReference type="InterPro" id="IPR040078">
    <property type="entry name" value="RNA_Pol_CTD_Phosphatase"/>
</dbReference>
<dbReference type="InterPro" id="IPR050365">
    <property type="entry name" value="TIM50"/>
</dbReference>
<dbReference type="NCBIfam" id="TIGR02251">
    <property type="entry name" value="HIF-SF_euk"/>
    <property type="match status" value="1"/>
</dbReference>
<dbReference type="PANTHER" id="PTHR12210">
    <property type="entry name" value="DULLARD PROTEIN PHOSPHATASE"/>
    <property type="match status" value="1"/>
</dbReference>
<dbReference type="Pfam" id="PF03031">
    <property type="entry name" value="NIF"/>
    <property type="match status" value="1"/>
</dbReference>
<dbReference type="SFLD" id="SFLDG01124">
    <property type="entry name" value="C0.1:_RNA_Pol_CTD_Phosphatase"/>
    <property type="match status" value="1"/>
</dbReference>
<dbReference type="SFLD" id="SFLDS00003">
    <property type="entry name" value="Haloacid_Dehalogenase"/>
    <property type="match status" value="1"/>
</dbReference>
<dbReference type="SMART" id="SM00577">
    <property type="entry name" value="CPDc"/>
    <property type="match status" value="1"/>
</dbReference>
<dbReference type="SUPFAM" id="SSF56784">
    <property type="entry name" value="HAD-like"/>
    <property type="match status" value="1"/>
</dbReference>
<dbReference type="PROSITE" id="PS50969">
    <property type="entry name" value="FCP1"/>
    <property type="match status" value="1"/>
</dbReference>
<feature type="chain" id="PRO_0000448931" description="Phosphatase Herzog">
    <location>
        <begin position="1"/>
        <end position="352"/>
    </location>
</feature>
<feature type="domain" description="FCP1 homology" evidence="1">
    <location>
        <begin position="108"/>
        <end position="266"/>
    </location>
</feature>
<feature type="region of interest" description="Prion-like domain necessary for both protein assembly and membrane targeting" evidence="3">
    <location>
        <begin position="1"/>
        <end position="102"/>
    </location>
</feature>
<feature type="region of interest" description="Mediates substrate recognition" evidence="3">
    <location>
        <begin position="103"/>
        <end position="267"/>
    </location>
</feature>
<feature type="region of interest" description="Disordered" evidence="2">
    <location>
        <begin position="284"/>
        <end position="310"/>
    </location>
</feature>
<feature type="region of interest" description="Disordered" evidence="2">
    <location>
        <begin position="332"/>
        <end position="352"/>
    </location>
</feature>
<feature type="splice variant" id="VSP_060469" description="In isoform A.">
    <location>
        <begin position="29"/>
        <end position="51"/>
    </location>
</feature>
<feature type="mutagenesis site" description="Loss of phosphatase activity." evidence="3">
    <original>DLD</original>
    <variation>ELN</variation>
    <location>
        <begin position="118"/>
        <end position="120"/>
    </location>
</feature>
<feature type="sequence conflict" description="In Ref. 3; AAQ22453." evidence="5" ref="3">
    <original>S</original>
    <variation>F</variation>
    <location>
        <position position="11"/>
    </location>
</feature>
<accession>M9PFN0</accession>
<accession>Q7YU53</accession>
<accession>Q9VUX0</accession>
<comment type="function">
    <text evidence="3">Prion-like membrane-associated phosphatase (PubMed:31491385). Phosphatase activity depends on amyloid-like assembly at the membrane (PubMed:31491385). Might have a role in establishment of segment polarity in embryos (PubMed:31491385).</text>
</comment>
<comment type="catalytic activity">
    <reaction evidence="3">
        <text>O-phospho-L-seryl-[protein] + H2O = L-seryl-[protein] + phosphate</text>
        <dbReference type="Rhea" id="RHEA:20629"/>
        <dbReference type="Rhea" id="RHEA-COMP:9863"/>
        <dbReference type="Rhea" id="RHEA-COMP:11604"/>
        <dbReference type="ChEBI" id="CHEBI:15377"/>
        <dbReference type="ChEBI" id="CHEBI:29999"/>
        <dbReference type="ChEBI" id="CHEBI:43474"/>
        <dbReference type="ChEBI" id="CHEBI:83421"/>
        <dbReference type="EC" id="3.1.3.16"/>
    </reaction>
</comment>
<comment type="activity regulation">
    <text evidence="3">Phosphatase activity requires amyloid-like aggregation on the membrane.</text>
</comment>
<comment type="subunit">
    <text evidence="3">Monomer (PubMed:31491385). Forms higher-order protein aggregates with amyloid-like features during gastrulation (PubMed:31491385). Interacts with babo, dah, Irk1, pch2, Ras64B, sax and Src64B (PubMed:31491385).</text>
</comment>
<comment type="subcellular location">
    <subcellularLocation>
        <location evidence="3">Cell membrane</location>
        <topology evidence="3">Peripheral membrane protein</topology>
    </subcellularLocation>
    <text evidence="3">During embryonic development shows diffuse localization between stages 1-5 and then shows foci formation at the cell membrane that persist till later stages.</text>
</comment>
<comment type="alternative products">
    <event type="alternative splicing"/>
    <isoform>
        <id>M9PFN0-1</id>
        <name evidence="8">B</name>
        <sequence type="displayed"/>
    </isoform>
    <isoform>
        <id>M9PFN0-2</id>
        <name evidence="8">A</name>
        <sequence type="described" ref="VSP_060469"/>
    </isoform>
</comment>
<comment type="developmental stage">
    <text evidence="3">Expressed ubiquitously throughout embryonic development (at protein level).</text>
</comment>
<name>HZG_DROME</name>
<proteinExistence type="evidence at protein level"/>
<organism evidence="9">
    <name type="scientific">Drosophila melanogaster</name>
    <name type="common">Fruit fly</name>
    <dbReference type="NCBI Taxonomy" id="7227"/>
    <lineage>
        <taxon>Eukaryota</taxon>
        <taxon>Metazoa</taxon>
        <taxon>Ecdysozoa</taxon>
        <taxon>Arthropoda</taxon>
        <taxon>Hexapoda</taxon>
        <taxon>Insecta</taxon>
        <taxon>Pterygota</taxon>
        <taxon>Neoptera</taxon>
        <taxon>Endopterygota</taxon>
        <taxon>Diptera</taxon>
        <taxon>Brachycera</taxon>
        <taxon>Muscomorpha</taxon>
        <taxon>Ephydroidea</taxon>
        <taxon>Drosophilidae</taxon>
        <taxon>Drosophila</taxon>
        <taxon>Sophophora</taxon>
    </lineage>
</organism>